<comment type="function">
    <text evidence="2">Histone demethylase that specifically demethylates 'Lys-36' of histone H3, thereby playing a central role in histone code.</text>
</comment>
<comment type="catalytic activity">
    <reaction evidence="2">
        <text>N(6),N(6)-dimethyl-L-lysyl(36)-[histone H3] + 2 2-oxoglutarate + 2 O2 = L-lysyl(36)-[histone H3] + 2 formaldehyde + 2 succinate + 2 CO2</text>
        <dbReference type="Rhea" id="RHEA:42032"/>
        <dbReference type="Rhea" id="RHEA-COMP:9785"/>
        <dbReference type="Rhea" id="RHEA-COMP:9787"/>
        <dbReference type="ChEBI" id="CHEBI:15379"/>
        <dbReference type="ChEBI" id="CHEBI:16526"/>
        <dbReference type="ChEBI" id="CHEBI:16810"/>
        <dbReference type="ChEBI" id="CHEBI:16842"/>
        <dbReference type="ChEBI" id="CHEBI:29969"/>
        <dbReference type="ChEBI" id="CHEBI:30031"/>
        <dbReference type="ChEBI" id="CHEBI:61976"/>
        <dbReference type="EC" id="1.14.11.27"/>
    </reaction>
</comment>
<comment type="cofactor">
    <cofactor evidence="1">
        <name>Fe(2+)</name>
        <dbReference type="ChEBI" id="CHEBI:29033"/>
    </cofactor>
    <text evidence="1">Binds 1 Fe(2+) ion per subunit.</text>
</comment>
<comment type="subcellular location">
    <subcellularLocation>
        <location evidence="1">Nucleus</location>
    </subcellularLocation>
</comment>
<comment type="domain">
    <text evidence="1">The JmjC domain mediates the demethylation activity.</text>
</comment>
<comment type="similarity">
    <text evidence="6">Belongs to the JHDM1 histone demethylase family.</text>
</comment>
<feature type="chain" id="PRO_0000226797" description="JmjC domain-containing histone demethylation protein 1">
    <location>
        <begin position="1"/>
        <end position="1407"/>
    </location>
</feature>
<feature type="domain" description="JmjC" evidence="4">
    <location>
        <begin position="577"/>
        <end position="735"/>
    </location>
</feature>
<feature type="zinc finger region" description="PHD-type" evidence="3">
    <location>
        <begin position="323"/>
        <end position="382"/>
    </location>
</feature>
<feature type="region of interest" description="Disordered" evidence="5">
    <location>
        <begin position="1"/>
        <end position="86"/>
    </location>
</feature>
<feature type="region of interest" description="Disordered" evidence="5">
    <location>
        <begin position="98"/>
        <end position="151"/>
    </location>
</feature>
<feature type="region of interest" description="Disordered" evidence="5">
    <location>
        <begin position="893"/>
        <end position="987"/>
    </location>
</feature>
<feature type="region of interest" description="Disordered" evidence="5">
    <location>
        <begin position="1004"/>
        <end position="1027"/>
    </location>
</feature>
<feature type="region of interest" description="Disordered" evidence="5">
    <location>
        <begin position="1122"/>
        <end position="1183"/>
    </location>
</feature>
<feature type="region of interest" description="Disordered" evidence="5">
    <location>
        <begin position="1252"/>
        <end position="1389"/>
    </location>
</feature>
<feature type="compositionally biased region" description="Basic and acidic residues" evidence="5">
    <location>
        <begin position="55"/>
        <end position="67"/>
    </location>
</feature>
<feature type="compositionally biased region" description="Basic and acidic residues" evidence="5">
    <location>
        <begin position="125"/>
        <end position="140"/>
    </location>
</feature>
<feature type="compositionally biased region" description="Polar residues" evidence="5">
    <location>
        <begin position="141"/>
        <end position="150"/>
    </location>
</feature>
<feature type="compositionally biased region" description="Basic and acidic residues" evidence="5">
    <location>
        <begin position="896"/>
        <end position="914"/>
    </location>
</feature>
<feature type="compositionally biased region" description="Basic and acidic residues" evidence="5">
    <location>
        <begin position="928"/>
        <end position="938"/>
    </location>
</feature>
<feature type="compositionally biased region" description="Polar residues" evidence="5">
    <location>
        <begin position="1008"/>
        <end position="1027"/>
    </location>
</feature>
<feature type="compositionally biased region" description="Basic and acidic residues" evidence="5">
    <location>
        <begin position="1254"/>
        <end position="1264"/>
    </location>
</feature>
<feature type="compositionally biased region" description="Low complexity" evidence="5">
    <location>
        <begin position="1273"/>
        <end position="1284"/>
    </location>
</feature>
<feature type="compositionally biased region" description="Basic and acidic residues" evidence="5">
    <location>
        <begin position="1285"/>
        <end position="1296"/>
    </location>
</feature>
<feature type="compositionally biased region" description="Low complexity" evidence="5">
    <location>
        <begin position="1297"/>
        <end position="1349"/>
    </location>
</feature>
<feature type="binding site" evidence="1">
    <location>
        <position position="628"/>
    </location>
    <ligand>
        <name>substrate</name>
    </ligand>
</feature>
<feature type="binding site" evidence="4">
    <location>
        <position position="631"/>
    </location>
    <ligand>
        <name>Fe cation</name>
        <dbReference type="ChEBI" id="CHEBI:24875"/>
        <note>catalytic</note>
    </ligand>
</feature>
<feature type="binding site" evidence="4">
    <location>
        <position position="633"/>
    </location>
    <ligand>
        <name>Fe cation</name>
        <dbReference type="ChEBI" id="CHEBI:24875"/>
        <note>catalytic</note>
    </ligand>
</feature>
<feature type="binding site" evidence="1">
    <location>
        <position position="648"/>
    </location>
    <ligand>
        <name>substrate</name>
    </ligand>
</feature>
<feature type="binding site" evidence="4">
    <location>
        <position position="703"/>
    </location>
    <ligand>
        <name>Fe cation</name>
        <dbReference type="ChEBI" id="CHEBI:24875"/>
        <note>catalytic</note>
    </ligand>
</feature>
<sequence length="1407" mass="156107">MISATSFVTAIGSRPPRYRTPSPPRRAVEPISPCSTADYRTYRASREISASATSDHVRSTPTDKRPSPADVPASHRSGHGRSSSTIDTLATIALATSPTFTPLTHRPPSDKSNTTLSMFPPETEPVERPAKRPRSERDESSYTQHRSNAFSIARPPAISDSMKTDAELLLNFARPTNLYPPIPSSKRANTDDSYHNHTFHTQAQIKERNASTYWVTNHENVIFNHSAMHNIPPSRMRSQSDGSAAISRPVIEGLRPNTSSSTLPPLAFQEEADSGDRHWDMERKPVLEESQVDFCKPDETVPILSQSQPLKKELDADSNGSSQASCATCNLVRIPVDNEDQDVTWISCDGCKRWFHIVCAGFKNDRETRTVDKFICKTCRPIHGQTTFVRKSSRVRTSIDYAGLNQGLVKSATDSLEHHYIEPIKQNKIRFLPENFPRMRPELVTAEYFEKGNGMTEPIVIPAEFNTHATIPPTNPEFDALVQDAPSQEMFDELLDHLPNVDHETVIDCGQNQLDMVIPQGLTVRTVSELYGPEERVEVIDVKSQHGEDKRWTMQKWADYYESTGDKVVRNVISLEVSQSKLGRLIRRPKIVRDLDLQDAVWPEELKAVGNFPKVQFYCLMSVADCYTDFHIDFGGSSVYYHILKGKKTFFFIPPKDKHLKKYEEWCNSPAQDYTFLGDQTKECYRVDLSEGDTMLIPSGWIHAVWTPENSLVIGGNFLTRLNYGMQIKIAKIEKETKVPMKFRYPFFQKIQWYAVLKYLEEDPVPQSVLAAFSQDENYRFHRKYPIYYEFGERANTEPKGSPYHNSRFYSQAELEGLPDLAKYLLRTALIAGSYLVEGVTADTRNAVKRSIPAMPGEPIDVIRTFGVWIAWKRGNEKAAHWTRPGVVESNAKLSLAEKRPAGRPSRRSERNADNQRTYAERQAVQRLSERPAVDIQKDSAPGDESVAPLANNSPPAATSGIPVPVMNEDTSQKHKTASRGSGLGPKRVACDACRKRRIRCHHKEENNGASGSQMTVSTSSLGHHTPTAQDAASALNSLAAIASGAGFQNGLHSIKGMDRMDASANFATSISATPHGVTLKVGDGSPDGLNSAKKGRSKACDDCRKSKRRCIHDEYGRIDPIKAQERSKPRATSLAKRPRVHEEAAPSSANKRLKQESTSPVAQPVHSSHMDTETPTRAQDSVENGVLDQYPRKSNTQHADGLPAEKALLPDQSSYASPPAFQADAVATKELPATVSKPAAVLVSPPTSLADEMDIHDQVDAGGEHVSVIYTPSSGSRQSSRQPRQVERYMPEVHFAKTAKSTTTTPQTTRRSSFGSSGRKTTPGLSSGSKKSGSRPSSSHGKKSLSPSVEKKAERHAISSAPFGQHGRGSKSEHGTSDVDPDAESLRLIREIQEQEFGLRRRAGRA</sequence>
<organism>
    <name type="scientific">Emericella nidulans (strain FGSC A4 / ATCC 38163 / CBS 112.46 / NRRL 194 / M139)</name>
    <name type="common">Aspergillus nidulans</name>
    <dbReference type="NCBI Taxonomy" id="227321"/>
    <lineage>
        <taxon>Eukaryota</taxon>
        <taxon>Fungi</taxon>
        <taxon>Dikarya</taxon>
        <taxon>Ascomycota</taxon>
        <taxon>Pezizomycotina</taxon>
        <taxon>Eurotiomycetes</taxon>
        <taxon>Eurotiomycetidae</taxon>
        <taxon>Eurotiales</taxon>
        <taxon>Aspergillaceae</taxon>
        <taxon>Aspergillus</taxon>
        <taxon>Aspergillus subgen. Nidulantes</taxon>
    </lineage>
</organism>
<reference key="1">
    <citation type="journal article" date="2005" name="Nature">
        <title>Sequencing of Aspergillus nidulans and comparative analysis with A. fumigatus and A. oryzae.</title>
        <authorList>
            <person name="Galagan J.E."/>
            <person name="Calvo S.E."/>
            <person name="Cuomo C."/>
            <person name="Ma L.-J."/>
            <person name="Wortman J.R."/>
            <person name="Batzoglou S."/>
            <person name="Lee S.-I."/>
            <person name="Bastuerkmen M."/>
            <person name="Spevak C.C."/>
            <person name="Clutterbuck J."/>
            <person name="Kapitonov V."/>
            <person name="Jurka J."/>
            <person name="Scazzocchio C."/>
            <person name="Farman M.L."/>
            <person name="Butler J."/>
            <person name="Purcell S."/>
            <person name="Harris S."/>
            <person name="Braus G.H."/>
            <person name="Draht O."/>
            <person name="Busch S."/>
            <person name="D'Enfert C."/>
            <person name="Bouchier C."/>
            <person name="Goldman G.H."/>
            <person name="Bell-Pedersen D."/>
            <person name="Griffiths-Jones S."/>
            <person name="Doonan J.H."/>
            <person name="Yu J."/>
            <person name="Vienken K."/>
            <person name="Pain A."/>
            <person name="Freitag M."/>
            <person name="Selker E.U."/>
            <person name="Archer D.B."/>
            <person name="Penalva M.A."/>
            <person name="Oakley B.R."/>
            <person name="Momany M."/>
            <person name="Tanaka T."/>
            <person name="Kumagai T."/>
            <person name="Asai K."/>
            <person name="Machida M."/>
            <person name="Nierman W.C."/>
            <person name="Denning D.W."/>
            <person name="Caddick M.X."/>
            <person name="Hynes M."/>
            <person name="Paoletti M."/>
            <person name="Fischer R."/>
            <person name="Miller B.L."/>
            <person name="Dyer P.S."/>
            <person name="Sachs M.S."/>
            <person name="Osmani S.A."/>
            <person name="Birren B.W."/>
        </authorList>
    </citation>
    <scope>NUCLEOTIDE SEQUENCE [LARGE SCALE GENOMIC DNA]</scope>
    <source>
        <strain>FGSC A4 / ATCC 38163 / CBS 112.46 / NRRL 194 / M139</strain>
    </source>
</reference>
<reference key="2">
    <citation type="journal article" date="2009" name="Fungal Genet. Biol.">
        <title>The 2008 update of the Aspergillus nidulans genome annotation: a community effort.</title>
        <authorList>
            <person name="Wortman J.R."/>
            <person name="Gilsenan J.M."/>
            <person name="Joardar V."/>
            <person name="Deegan J."/>
            <person name="Clutterbuck J."/>
            <person name="Andersen M.R."/>
            <person name="Archer D."/>
            <person name="Bencina M."/>
            <person name="Braus G."/>
            <person name="Coutinho P."/>
            <person name="von Dohren H."/>
            <person name="Doonan J."/>
            <person name="Driessen A.J."/>
            <person name="Durek P."/>
            <person name="Espeso E."/>
            <person name="Fekete E."/>
            <person name="Flipphi M."/>
            <person name="Estrada C.G."/>
            <person name="Geysens S."/>
            <person name="Goldman G."/>
            <person name="de Groot P.W."/>
            <person name="Hansen K."/>
            <person name="Harris S.D."/>
            <person name="Heinekamp T."/>
            <person name="Helmstaedt K."/>
            <person name="Henrissat B."/>
            <person name="Hofmann G."/>
            <person name="Homan T."/>
            <person name="Horio T."/>
            <person name="Horiuchi H."/>
            <person name="James S."/>
            <person name="Jones M."/>
            <person name="Karaffa L."/>
            <person name="Karanyi Z."/>
            <person name="Kato M."/>
            <person name="Keller N."/>
            <person name="Kelly D.E."/>
            <person name="Kiel J.A."/>
            <person name="Kim J.M."/>
            <person name="van der Klei I.J."/>
            <person name="Klis F.M."/>
            <person name="Kovalchuk A."/>
            <person name="Krasevec N."/>
            <person name="Kubicek C.P."/>
            <person name="Liu B."/>
            <person name="Maccabe A."/>
            <person name="Meyer V."/>
            <person name="Mirabito P."/>
            <person name="Miskei M."/>
            <person name="Mos M."/>
            <person name="Mullins J."/>
            <person name="Nelson D.R."/>
            <person name="Nielsen J."/>
            <person name="Oakley B.R."/>
            <person name="Osmani S.A."/>
            <person name="Pakula T."/>
            <person name="Paszewski A."/>
            <person name="Paulsen I."/>
            <person name="Pilsyk S."/>
            <person name="Pocsi I."/>
            <person name="Punt P.J."/>
            <person name="Ram A.F."/>
            <person name="Ren Q."/>
            <person name="Robellet X."/>
            <person name="Robson G."/>
            <person name="Seiboth B."/>
            <person name="van Solingen P."/>
            <person name="Specht T."/>
            <person name="Sun J."/>
            <person name="Taheri-Talesh N."/>
            <person name="Takeshita N."/>
            <person name="Ussery D."/>
            <person name="vanKuyk P.A."/>
            <person name="Visser H."/>
            <person name="van de Vondervoort P.J."/>
            <person name="de Vries R.P."/>
            <person name="Walton J."/>
            <person name="Xiang X."/>
            <person name="Xiong Y."/>
            <person name="Zeng A.P."/>
            <person name="Brandt B.W."/>
            <person name="Cornell M.J."/>
            <person name="van den Hondel C.A."/>
            <person name="Visser J."/>
            <person name="Oliver S.G."/>
            <person name="Turner G."/>
        </authorList>
    </citation>
    <scope>GENOME REANNOTATION</scope>
    <source>
        <strain>FGSC A4 / ATCC 38163 / CBS 112.46 / NRRL 194 / M139</strain>
    </source>
</reference>
<dbReference type="EC" id="1.14.11.27" evidence="2"/>
<dbReference type="EMBL" id="AACD01000129">
    <property type="protein sequence ID" value="EAA62035.1"/>
    <property type="molecule type" value="Genomic_DNA"/>
</dbReference>
<dbReference type="EMBL" id="BN001304">
    <property type="protein sequence ID" value="CBF79416.1"/>
    <property type="molecule type" value="Genomic_DNA"/>
</dbReference>
<dbReference type="RefSeq" id="XP_680724.1">
    <property type="nucleotide sequence ID" value="XM_675632.1"/>
</dbReference>
<dbReference type="SMR" id="Q5AW75"/>
<dbReference type="STRING" id="227321.Q5AW75"/>
<dbReference type="EnsemblFungi" id="CBF79416">
    <property type="protein sequence ID" value="CBF79416"/>
    <property type="gene ID" value="ANIA_07455"/>
</dbReference>
<dbReference type="KEGG" id="ani:ANIA_07455"/>
<dbReference type="VEuPathDB" id="FungiDB:AN7455"/>
<dbReference type="eggNOG" id="KOG1633">
    <property type="taxonomic scope" value="Eukaryota"/>
</dbReference>
<dbReference type="HOGENOM" id="CLU_002979_0_1_1"/>
<dbReference type="InParanoid" id="Q5AW75"/>
<dbReference type="OMA" id="KFGIWVA"/>
<dbReference type="OrthoDB" id="5876800at2759"/>
<dbReference type="Proteomes" id="UP000000560">
    <property type="component" value="Chromosome IV"/>
</dbReference>
<dbReference type="GO" id="GO:0005634">
    <property type="term" value="C:nucleus"/>
    <property type="evidence" value="ECO:0007669"/>
    <property type="project" value="UniProtKB-SubCell"/>
</dbReference>
<dbReference type="GO" id="GO:0000981">
    <property type="term" value="F:DNA-binding transcription factor activity, RNA polymerase II-specific"/>
    <property type="evidence" value="ECO:0007669"/>
    <property type="project" value="InterPro"/>
</dbReference>
<dbReference type="GO" id="GO:0032452">
    <property type="term" value="F:histone demethylase activity"/>
    <property type="evidence" value="ECO:0000318"/>
    <property type="project" value="GO_Central"/>
</dbReference>
<dbReference type="GO" id="GO:0140680">
    <property type="term" value="F:histone H3K36me/H3K36me2 demethylase activity"/>
    <property type="evidence" value="ECO:0007669"/>
    <property type="project" value="UniProtKB-EC"/>
</dbReference>
<dbReference type="GO" id="GO:0003712">
    <property type="term" value="F:transcription coregulator activity"/>
    <property type="evidence" value="ECO:0000318"/>
    <property type="project" value="GO_Central"/>
</dbReference>
<dbReference type="GO" id="GO:0008270">
    <property type="term" value="F:zinc ion binding"/>
    <property type="evidence" value="ECO:0007669"/>
    <property type="project" value="UniProtKB-KW"/>
</dbReference>
<dbReference type="GO" id="GO:0006338">
    <property type="term" value="P:chromatin remodeling"/>
    <property type="evidence" value="ECO:0000318"/>
    <property type="project" value="GO_Central"/>
</dbReference>
<dbReference type="GO" id="GO:0006357">
    <property type="term" value="P:regulation of transcription by RNA polymerase II"/>
    <property type="evidence" value="ECO:0000318"/>
    <property type="project" value="GO_Central"/>
</dbReference>
<dbReference type="CDD" id="cd00067">
    <property type="entry name" value="GAL4"/>
    <property type="match status" value="1"/>
</dbReference>
<dbReference type="CDD" id="cd15517">
    <property type="entry name" value="PHD_TCF19_like"/>
    <property type="match status" value="1"/>
</dbReference>
<dbReference type="Gene3D" id="2.60.120.650">
    <property type="entry name" value="Cupin"/>
    <property type="match status" value="2"/>
</dbReference>
<dbReference type="InterPro" id="IPR041070">
    <property type="entry name" value="JHD"/>
</dbReference>
<dbReference type="InterPro" id="IPR050690">
    <property type="entry name" value="JHDM1_Histone_Demethylase"/>
</dbReference>
<dbReference type="InterPro" id="IPR003347">
    <property type="entry name" value="JmjC_dom"/>
</dbReference>
<dbReference type="InterPro" id="IPR019786">
    <property type="entry name" value="Zinc_finger_PHD-type_CS"/>
</dbReference>
<dbReference type="InterPro" id="IPR001138">
    <property type="entry name" value="Zn2Cys6_DnaBD"/>
</dbReference>
<dbReference type="InterPro" id="IPR011011">
    <property type="entry name" value="Znf_FYVE_PHD"/>
</dbReference>
<dbReference type="InterPro" id="IPR001965">
    <property type="entry name" value="Znf_PHD"/>
</dbReference>
<dbReference type="InterPro" id="IPR019787">
    <property type="entry name" value="Znf_PHD-finger"/>
</dbReference>
<dbReference type="PANTHER" id="PTHR23123">
    <property type="entry name" value="PHD/F-BOX CONTAINING PROTEIN"/>
    <property type="match status" value="1"/>
</dbReference>
<dbReference type="Pfam" id="PF17811">
    <property type="entry name" value="JHD"/>
    <property type="match status" value="1"/>
</dbReference>
<dbReference type="Pfam" id="PF02373">
    <property type="entry name" value="JmjC"/>
    <property type="match status" value="1"/>
</dbReference>
<dbReference type="Pfam" id="PF00628">
    <property type="entry name" value="PHD"/>
    <property type="match status" value="1"/>
</dbReference>
<dbReference type="SMART" id="SM00558">
    <property type="entry name" value="JmjC"/>
    <property type="match status" value="1"/>
</dbReference>
<dbReference type="SMART" id="SM00249">
    <property type="entry name" value="PHD"/>
    <property type="match status" value="1"/>
</dbReference>
<dbReference type="SUPFAM" id="SSF51197">
    <property type="entry name" value="Clavaminate synthase-like"/>
    <property type="match status" value="1"/>
</dbReference>
<dbReference type="SUPFAM" id="SSF57903">
    <property type="entry name" value="FYVE/PHD zinc finger"/>
    <property type="match status" value="1"/>
</dbReference>
<dbReference type="PROSITE" id="PS51184">
    <property type="entry name" value="JMJC"/>
    <property type="match status" value="1"/>
</dbReference>
<dbReference type="PROSITE" id="PS01359">
    <property type="entry name" value="ZF_PHD_1"/>
    <property type="match status" value="1"/>
</dbReference>
<dbReference type="PROSITE" id="PS50016">
    <property type="entry name" value="ZF_PHD_2"/>
    <property type="match status" value="1"/>
</dbReference>
<name>JHD1_EMENI</name>
<keyword id="KW-0156">Chromatin regulator</keyword>
<keyword id="KW-0223">Dioxygenase</keyword>
<keyword id="KW-0408">Iron</keyword>
<keyword id="KW-0479">Metal-binding</keyword>
<keyword id="KW-0539">Nucleus</keyword>
<keyword id="KW-0560">Oxidoreductase</keyword>
<keyword id="KW-1185">Reference proteome</keyword>
<keyword id="KW-0804">Transcription</keyword>
<keyword id="KW-0805">Transcription regulation</keyword>
<keyword id="KW-0862">Zinc</keyword>
<keyword id="KW-0863">Zinc-finger</keyword>
<protein>
    <recommendedName>
        <fullName>JmjC domain-containing histone demethylation protein 1</fullName>
        <ecNumber evidence="2">1.14.11.27</ecNumber>
    </recommendedName>
    <alternativeName>
        <fullName>[Histone-H3]-lysine-36 demethylase 1</fullName>
    </alternativeName>
</protein>
<gene>
    <name type="primary">jhd1</name>
    <name type="ORF">AN7455</name>
</gene>
<accession>Q5AW75</accession>
<accession>C8VBD1</accession>
<proteinExistence type="inferred from homology"/>
<evidence type="ECO:0000250" key="1"/>
<evidence type="ECO:0000250" key="2">
    <source>
        <dbReference type="UniProtKB" id="P40034"/>
    </source>
</evidence>
<evidence type="ECO:0000255" key="3">
    <source>
        <dbReference type="PROSITE-ProRule" id="PRU00146"/>
    </source>
</evidence>
<evidence type="ECO:0000255" key="4">
    <source>
        <dbReference type="PROSITE-ProRule" id="PRU00538"/>
    </source>
</evidence>
<evidence type="ECO:0000256" key="5">
    <source>
        <dbReference type="SAM" id="MobiDB-lite"/>
    </source>
</evidence>
<evidence type="ECO:0000305" key="6"/>